<name>CYSD_ECOBW</name>
<comment type="function">
    <text evidence="1">With CysN forms the ATP sulfurylase (ATPS) that catalyzes the adenylation of sulfate producing adenosine 5'-phosphosulfate (APS) and diphosphate, the first enzymatic step in sulfur assimilation pathway. APS synthesis involves the formation of a high-energy phosphoric-sulfuric acid anhydride bond driven by GTP hydrolysis by CysN coupled to ATP hydrolysis by CysD.</text>
</comment>
<comment type="catalytic activity">
    <reaction evidence="1">
        <text>sulfate + ATP + H(+) = adenosine 5'-phosphosulfate + diphosphate</text>
        <dbReference type="Rhea" id="RHEA:18133"/>
        <dbReference type="ChEBI" id="CHEBI:15378"/>
        <dbReference type="ChEBI" id="CHEBI:16189"/>
        <dbReference type="ChEBI" id="CHEBI:30616"/>
        <dbReference type="ChEBI" id="CHEBI:33019"/>
        <dbReference type="ChEBI" id="CHEBI:58243"/>
        <dbReference type="EC" id="2.7.7.4"/>
    </reaction>
</comment>
<comment type="pathway">
    <text evidence="1">Sulfur metabolism; hydrogen sulfide biosynthesis; sulfite from sulfate: step 1/3.</text>
</comment>
<comment type="subunit">
    <text evidence="1">Heterodimer composed of CysD, the smaller subunit, and CysN.</text>
</comment>
<comment type="similarity">
    <text evidence="1">Belongs to the PAPS reductase family. CysD subfamily.</text>
</comment>
<reference key="1">
    <citation type="journal article" date="2009" name="J. Bacteriol.">
        <title>Genomic sequencing reveals regulatory mutations and recombinational events in the widely used MC4100 lineage of Escherichia coli K-12.</title>
        <authorList>
            <person name="Ferenci T."/>
            <person name="Zhou Z."/>
            <person name="Betteridge T."/>
            <person name="Ren Y."/>
            <person name="Liu Y."/>
            <person name="Feng L."/>
            <person name="Reeves P.R."/>
            <person name="Wang L."/>
        </authorList>
    </citation>
    <scope>NUCLEOTIDE SEQUENCE [LARGE SCALE GENOMIC DNA]</scope>
    <source>
        <strain>K12 / MC4100 / BW2952</strain>
    </source>
</reference>
<protein>
    <recommendedName>
        <fullName evidence="1">Sulfate adenylyltransferase subunit 2</fullName>
        <ecNumber evidence="1">2.7.7.4</ecNumber>
    </recommendedName>
    <alternativeName>
        <fullName evidence="1">ATP-sulfurylase small subunit</fullName>
    </alternativeName>
    <alternativeName>
        <fullName evidence="1">Sulfate adenylate transferase</fullName>
        <shortName evidence="1">SAT</shortName>
    </alternativeName>
</protein>
<evidence type="ECO:0000255" key="1">
    <source>
        <dbReference type="HAMAP-Rule" id="MF_00064"/>
    </source>
</evidence>
<accession>C4ZZQ6</accession>
<sequence>MDQIRLTHLRQLEAESIHIIREVAAEFSNPVMLYSIGKDSSVMLHLARKAFYPGTLPFPLLHVDTGWKFREMYEFRDRTAKAYGCELLVHKNPEGVAMGINPFVHGSAKHTDIMKTEGLKQALNKYGFDAAFGGARRDEEKSRAKERIYSFRDRFHRWDPKNQRPELWHNYNGQINKGESIRVFPLSNWTEQDIWQYIWLENIDIVPLYLAAERPVLERDGMLMMIDDNRIDLQPGEVIKKRMVRFRTLGCWPLTGAVESNAQTLPEIIEEMLVSTTSERQGRVIDRDQAGSMELKKRQGYF</sequence>
<proteinExistence type="inferred from homology"/>
<keyword id="KW-0067">ATP-binding</keyword>
<keyword id="KW-0547">Nucleotide-binding</keyword>
<keyword id="KW-0548">Nucleotidyltransferase</keyword>
<keyword id="KW-0808">Transferase</keyword>
<gene>
    <name evidence="1" type="primary">cysD</name>
    <name type="ordered locus">BWG_2488</name>
</gene>
<feature type="chain" id="PRO_1000202400" description="Sulfate adenylyltransferase subunit 2">
    <location>
        <begin position="1"/>
        <end position="302"/>
    </location>
</feature>
<organism>
    <name type="scientific">Escherichia coli (strain K12 / MC4100 / BW2952)</name>
    <dbReference type="NCBI Taxonomy" id="595496"/>
    <lineage>
        <taxon>Bacteria</taxon>
        <taxon>Pseudomonadati</taxon>
        <taxon>Pseudomonadota</taxon>
        <taxon>Gammaproteobacteria</taxon>
        <taxon>Enterobacterales</taxon>
        <taxon>Enterobacteriaceae</taxon>
        <taxon>Escherichia</taxon>
    </lineage>
</organism>
<dbReference type="EC" id="2.7.7.4" evidence="1"/>
<dbReference type="EMBL" id="CP001396">
    <property type="protein sequence ID" value="ACR65597.1"/>
    <property type="molecule type" value="Genomic_DNA"/>
</dbReference>
<dbReference type="RefSeq" id="WP_000372108.1">
    <property type="nucleotide sequence ID" value="NC_012759.1"/>
</dbReference>
<dbReference type="SMR" id="C4ZZQ6"/>
<dbReference type="GeneID" id="93779254"/>
<dbReference type="KEGG" id="ebw:BWG_2488"/>
<dbReference type="HOGENOM" id="CLU_043026_0_0_6"/>
<dbReference type="UniPathway" id="UPA00140">
    <property type="reaction ID" value="UER00204"/>
</dbReference>
<dbReference type="GO" id="GO:0005524">
    <property type="term" value="F:ATP binding"/>
    <property type="evidence" value="ECO:0007669"/>
    <property type="project" value="UniProtKB-KW"/>
</dbReference>
<dbReference type="GO" id="GO:0004781">
    <property type="term" value="F:sulfate adenylyltransferase (ATP) activity"/>
    <property type="evidence" value="ECO:0007669"/>
    <property type="project" value="UniProtKB-UniRule"/>
</dbReference>
<dbReference type="GO" id="GO:0070814">
    <property type="term" value="P:hydrogen sulfide biosynthetic process"/>
    <property type="evidence" value="ECO:0007669"/>
    <property type="project" value="UniProtKB-UniRule"/>
</dbReference>
<dbReference type="GO" id="GO:0000103">
    <property type="term" value="P:sulfate assimilation"/>
    <property type="evidence" value="ECO:0007669"/>
    <property type="project" value="UniProtKB-UniRule"/>
</dbReference>
<dbReference type="CDD" id="cd23946">
    <property type="entry name" value="Sulfate_adenylyltransferase_2"/>
    <property type="match status" value="1"/>
</dbReference>
<dbReference type="FunFam" id="3.40.50.620:FF:000002">
    <property type="entry name" value="Sulfate adenylyltransferase subunit 2"/>
    <property type="match status" value="1"/>
</dbReference>
<dbReference type="Gene3D" id="3.40.50.620">
    <property type="entry name" value="HUPs"/>
    <property type="match status" value="1"/>
</dbReference>
<dbReference type="HAMAP" id="MF_00064">
    <property type="entry name" value="Sulf_adenylyltr_sub2"/>
    <property type="match status" value="1"/>
</dbReference>
<dbReference type="InterPro" id="IPR002500">
    <property type="entry name" value="PAPS_reduct_dom"/>
</dbReference>
<dbReference type="InterPro" id="IPR014729">
    <property type="entry name" value="Rossmann-like_a/b/a_fold"/>
</dbReference>
<dbReference type="InterPro" id="IPR011784">
    <property type="entry name" value="SO4_adenylTrfase_ssu"/>
</dbReference>
<dbReference type="InterPro" id="IPR050128">
    <property type="entry name" value="Sulfate_adenylyltrnsfr_sub2"/>
</dbReference>
<dbReference type="NCBIfam" id="TIGR02039">
    <property type="entry name" value="CysD"/>
    <property type="match status" value="1"/>
</dbReference>
<dbReference type="NCBIfam" id="NF003587">
    <property type="entry name" value="PRK05253.1"/>
    <property type="match status" value="1"/>
</dbReference>
<dbReference type="NCBIfam" id="NF009214">
    <property type="entry name" value="PRK12563.1"/>
    <property type="match status" value="1"/>
</dbReference>
<dbReference type="PANTHER" id="PTHR43196">
    <property type="entry name" value="SULFATE ADENYLYLTRANSFERASE SUBUNIT 2"/>
    <property type="match status" value="1"/>
</dbReference>
<dbReference type="PANTHER" id="PTHR43196:SF1">
    <property type="entry name" value="SULFATE ADENYLYLTRANSFERASE SUBUNIT 2"/>
    <property type="match status" value="1"/>
</dbReference>
<dbReference type="Pfam" id="PF01507">
    <property type="entry name" value="PAPS_reduct"/>
    <property type="match status" value="1"/>
</dbReference>
<dbReference type="PIRSF" id="PIRSF002936">
    <property type="entry name" value="CysDAde_trans"/>
    <property type="match status" value="1"/>
</dbReference>
<dbReference type="SUPFAM" id="SSF52402">
    <property type="entry name" value="Adenine nucleotide alpha hydrolases-like"/>
    <property type="match status" value="1"/>
</dbReference>